<accession>A1D4Q5</accession>
<keyword id="KW-0119">Carbohydrate metabolism</keyword>
<keyword id="KW-0961">Cell wall biogenesis/degradation</keyword>
<keyword id="KW-1015">Disulfide bond</keyword>
<keyword id="KW-0326">Glycosidase</keyword>
<keyword id="KW-0378">Hydrolase</keyword>
<keyword id="KW-0464">Manganese</keyword>
<keyword id="KW-0479">Metal-binding</keyword>
<keyword id="KW-0624">Polysaccharide degradation</keyword>
<keyword id="KW-1185">Reference proteome</keyword>
<keyword id="KW-0964">Secreted</keyword>
<keyword id="KW-0732">Signal</keyword>
<reference key="1">
    <citation type="journal article" date="2008" name="PLoS Genet.">
        <title>Genomic islands in the pathogenic filamentous fungus Aspergillus fumigatus.</title>
        <authorList>
            <person name="Fedorova N.D."/>
            <person name="Khaldi N."/>
            <person name="Joardar V.S."/>
            <person name="Maiti R."/>
            <person name="Amedeo P."/>
            <person name="Anderson M.J."/>
            <person name="Crabtree J."/>
            <person name="Silva J.C."/>
            <person name="Badger J.H."/>
            <person name="Albarraq A."/>
            <person name="Angiuoli S."/>
            <person name="Bussey H."/>
            <person name="Bowyer P."/>
            <person name="Cotty P.J."/>
            <person name="Dyer P.S."/>
            <person name="Egan A."/>
            <person name="Galens K."/>
            <person name="Fraser-Liggett C.M."/>
            <person name="Haas B.J."/>
            <person name="Inman J.M."/>
            <person name="Kent R."/>
            <person name="Lemieux S."/>
            <person name="Malavazi I."/>
            <person name="Orvis J."/>
            <person name="Roemer T."/>
            <person name="Ronning C.M."/>
            <person name="Sundaram J.P."/>
            <person name="Sutton G."/>
            <person name="Turner G."/>
            <person name="Venter J.C."/>
            <person name="White O.R."/>
            <person name="Whitty B.R."/>
            <person name="Youngman P."/>
            <person name="Wolfe K.H."/>
            <person name="Goldman G.H."/>
            <person name="Wortman J.R."/>
            <person name="Jiang B."/>
            <person name="Denning D.W."/>
            <person name="Nierman W.C."/>
        </authorList>
    </citation>
    <scope>NUCLEOTIDE SEQUENCE [LARGE SCALE GENOMIC DNA]</scope>
    <source>
        <strain>ATCC 1020 / DSM 3700 / CBS 544.65 / FGSC A1164 / JCM 1740 / NRRL 181 / WB 181</strain>
    </source>
</reference>
<evidence type="ECO:0000250" key="1"/>
<evidence type="ECO:0000255" key="2"/>
<evidence type="ECO:0000305" key="3"/>
<name>EXGA_NEOFI</name>
<gene>
    <name type="primary">exgA</name>
    <name type="synonym">exg1</name>
    <name type="ORF">NFIA_021060</name>
</gene>
<comment type="function">
    <text evidence="1">Beta-glucanases participate in the metabolism of beta-glucan, the main structural component of the cell wall. It could also function biosynthetically as a transglycosylase (By similarity).</text>
</comment>
<comment type="catalytic activity">
    <reaction>
        <text>Successive hydrolysis of beta-D-glucose units from the non-reducing ends of (1-&gt;3)-beta-D-glucans, releasing alpha-glucose.</text>
        <dbReference type="EC" id="3.2.1.58"/>
    </reaction>
</comment>
<comment type="cofactor">
    <cofactor evidence="1">
        <name>Mn(2+)</name>
        <dbReference type="ChEBI" id="CHEBI:29035"/>
    </cofactor>
</comment>
<comment type="subunit">
    <text evidence="1">Monomer.</text>
</comment>
<comment type="subcellular location">
    <subcellularLocation>
        <location evidence="1">Secreted</location>
    </subcellularLocation>
</comment>
<comment type="similarity">
    <text evidence="3">Belongs to the glycosyl hydrolase 5 (cellulase A) family.</text>
</comment>
<proteinExistence type="inferred from homology"/>
<feature type="signal peptide" evidence="2">
    <location>
        <begin position="1"/>
        <end position="22"/>
    </location>
</feature>
<feature type="chain" id="PRO_0000393533" description="Probable glucan 1,3-beta-glucosidase A">
    <location>
        <begin position="23"/>
        <end position="416"/>
    </location>
</feature>
<feature type="active site" description="Proton donor" evidence="1">
    <location>
        <position position="211"/>
    </location>
</feature>
<feature type="active site" description="Nucleophile" evidence="1">
    <location>
        <position position="308"/>
    </location>
</feature>
<feature type="disulfide bond" evidence="1">
    <location>
        <begin position="291"/>
        <end position="415"/>
    </location>
</feature>
<feature type="disulfide bond" evidence="1">
    <location>
        <begin position="316"/>
        <end position="342"/>
    </location>
</feature>
<protein>
    <recommendedName>
        <fullName>Probable glucan 1,3-beta-glucosidase A</fullName>
        <ecNumber>3.2.1.58</ecNumber>
    </recommendedName>
    <alternativeName>
        <fullName>Exo-1,3-beta-glucanase 1</fullName>
    </alternativeName>
    <alternativeName>
        <fullName>Exo-1,3-beta-glucanase A</fullName>
    </alternativeName>
</protein>
<dbReference type="EC" id="3.2.1.58"/>
<dbReference type="EMBL" id="DS027688">
    <property type="protein sequence ID" value="EAW23398.1"/>
    <property type="molecule type" value="Genomic_DNA"/>
</dbReference>
<dbReference type="RefSeq" id="XP_001265295.1">
    <property type="nucleotide sequence ID" value="XM_001265294.1"/>
</dbReference>
<dbReference type="SMR" id="A1D4Q5"/>
<dbReference type="STRING" id="331117.A1D4Q5"/>
<dbReference type="EnsemblFungi" id="EAW23398">
    <property type="protein sequence ID" value="EAW23398"/>
    <property type="gene ID" value="NFIA_021060"/>
</dbReference>
<dbReference type="GeneID" id="4591258"/>
<dbReference type="KEGG" id="nfi:NFIA_021060"/>
<dbReference type="VEuPathDB" id="FungiDB:NFIA_021060"/>
<dbReference type="eggNOG" id="ENOG502QPYU">
    <property type="taxonomic scope" value="Eukaryota"/>
</dbReference>
<dbReference type="HOGENOM" id="CLU_004624_0_1_1"/>
<dbReference type="OMA" id="GWDMQDL"/>
<dbReference type="OrthoDB" id="62120at2759"/>
<dbReference type="Proteomes" id="UP000006702">
    <property type="component" value="Unassembled WGS sequence"/>
</dbReference>
<dbReference type="GO" id="GO:0009986">
    <property type="term" value="C:cell surface"/>
    <property type="evidence" value="ECO:0007669"/>
    <property type="project" value="TreeGrafter"/>
</dbReference>
<dbReference type="GO" id="GO:0005576">
    <property type="term" value="C:extracellular region"/>
    <property type="evidence" value="ECO:0007669"/>
    <property type="project" value="UniProtKB-SubCell"/>
</dbReference>
<dbReference type="GO" id="GO:0004338">
    <property type="term" value="F:glucan exo-1,3-beta-glucosidase activity"/>
    <property type="evidence" value="ECO:0007669"/>
    <property type="project" value="UniProtKB-EC"/>
</dbReference>
<dbReference type="GO" id="GO:0046872">
    <property type="term" value="F:metal ion binding"/>
    <property type="evidence" value="ECO:0007669"/>
    <property type="project" value="UniProtKB-KW"/>
</dbReference>
<dbReference type="GO" id="GO:0071555">
    <property type="term" value="P:cell wall organization"/>
    <property type="evidence" value="ECO:0007669"/>
    <property type="project" value="UniProtKB-KW"/>
</dbReference>
<dbReference type="GO" id="GO:0009251">
    <property type="term" value="P:glucan catabolic process"/>
    <property type="evidence" value="ECO:0007669"/>
    <property type="project" value="TreeGrafter"/>
</dbReference>
<dbReference type="FunFam" id="3.20.20.80:FF:000033">
    <property type="entry name" value="Glucan 1,3-beta-glucosidase A"/>
    <property type="match status" value="1"/>
</dbReference>
<dbReference type="Gene3D" id="3.20.20.80">
    <property type="entry name" value="Glycosidases"/>
    <property type="match status" value="1"/>
</dbReference>
<dbReference type="InterPro" id="IPR001547">
    <property type="entry name" value="Glyco_hydro_5"/>
</dbReference>
<dbReference type="InterPro" id="IPR017853">
    <property type="entry name" value="Glycoside_hydrolase_SF"/>
</dbReference>
<dbReference type="InterPro" id="IPR050386">
    <property type="entry name" value="Glycosyl_hydrolase_5"/>
</dbReference>
<dbReference type="PANTHER" id="PTHR31297:SF1">
    <property type="entry name" value="GLUCAN 1,3-BETA-GLUCOSIDASE I_II-RELATED"/>
    <property type="match status" value="1"/>
</dbReference>
<dbReference type="PANTHER" id="PTHR31297">
    <property type="entry name" value="GLUCAN ENDO-1,6-BETA-GLUCOSIDASE B"/>
    <property type="match status" value="1"/>
</dbReference>
<dbReference type="Pfam" id="PF00150">
    <property type="entry name" value="Cellulase"/>
    <property type="match status" value="1"/>
</dbReference>
<dbReference type="SUPFAM" id="SSF51445">
    <property type="entry name" value="(Trans)glycosidases"/>
    <property type="match status" value="1"/>
</dbReference>
<sequence>MIFKFSQKALVALCLVVGLAEAVPSKSRVVSRASTFDYNGIVRGVNIGGWLVLEPWITPSIFDNAGDAAVDEWTLTATLGQDQAKAVLSQHWSTFITQGDFHRIAQAGMNHVRIPIGYWAVSSLPDEPYVDGQLEYLDNAISWARDAGLKVVIDLHGAPGSQNGFDNSGRKGPIAWQQGNTVSQTVDAFRALAERYLPQSDVVAAIEALNEPNIPGGVSEAGLRDYYDQIADVVRQINPDTSVFLSDGFLSTASWNGFKTGEDVVMDTHHYEMFDNYLISLDIHGHVKSACDFGKQIKGSDKPVVVGEWSGAVTDCTKYLNGKGVPTRYQGEYANNPKYGDCGDKTQGSVADLSDQERADTRRFIEAQLDAYEGKNGWLFWTWKTEGAPGWDMQDLLANGVFPSPLTDRQFPNQCA</sequence>
<organism>
    <name type="scientific">Neosartorya fischeri (strain ATCC 1020 / DSM 3700 / CBS 544.65 / FGSC A1164 / JCM 1740 / NRRL 181 / WB 181)</name>
    <name type="common">Aspergillus fischerianus</name>
    <dbReference type="NCBI Taxonomy" id="331117"/>
    <lineage>
        <taxon>Eukaryota</taxon>
        <taxon>Fungi</taxon>
        <taxon>Dikarya</taxon>
        <taxon>Ascomycota</taxon>
        <taxon>Pezizomycotina</taxon>
        <taxon>Eurotiomycetes</taxon>
        <taxon>Eurotiomycetidae</taxon>
        <taxon>Eurotiales</taxon>
        <taxon>Aspergillaceae</taxon>
        <taxon>Aspergillus</taxon>
        <taxon>Aspergillus subgen. Fumigati</taxon>
    </lineage>
</organism>